<accession>Q12731</accession>
<accession>C8V8Z5</accession>
<accession>Q5B3A4</accession>
<name>TBP_EMENI</name>
<feature type="chain" id="PRO_0000153988" description="TATA-box-binding protein">
    <location>
        <begin position="1"/>
        <end position="268"/>
    </location>
</feature>
<feature type="repeat" description="1">
    <location>
        <begin position="95"/>
        <end position="171"/>
    </location>
</feature>
<feature type="repeat" description="2">
    <location>
        <begin position="185"/>
        <end position="262"/>
    </location>
</feature>
<feature type="region of interest" description="Disordered" evidence="1">
    <location>
        <begin position="1"/>
        <end position="86"/>
    </location>
</feature>
<feature type="compositionally biased region" description="Polar residues" evidence="1">
    <location>
        <begin position="1"/>
        <end position="24"/>
    </location>
</feature>
<feature type="compositionally biased region" description="Low complexity" evidence="1">
    <location>
        <begin position="50"/>
        <end position="86"/>
    </location>
</feature>
<keyword id="KW-0238">DNA-binding</keyword>
<keyword id="KW-0539">Nucleus</keyword>
<keyword id="KW-1185">Reference proteome</keyword>
<keyword id="KW-0677">Repeat</keyword>
<keyword id="KW-0804">Transcription</keyword>
<reference key="1">
    <citation type="journal article" date="1997" name="Microbiology">
        <title>The TBP gene from Aspergillus nidulans-structure and expression in Saccharomyces cerevisiae.</title>
        <authorList>
            <person name="Kucharski R."/>
            <person name="Bartnik E."/>
        </authorList>
    </citation>
    <scope>NUCLEOTIDE SEQUENCE [GENOMIC DNA / MRNA]</scope>
</reference>
<reference key="2">
    <citation type="journal article" date="2005" name="Nature">
        <title>Sequencing of Aspergillus nidulans and comparative analysis with A. fumigatus and A. oryzae.</title>
        <authorList>
            <person name="Galagan J.E."/>
            <person name="Calvo S.E."/>
            <person name="Cuomo C."/>
            <person name="Ma L.-J."/>
            <person name="Wortman J.R."/>
            <person name="Batzoglou S."/>
            <person name="Lee S.-I."/>
            <person name="Bastuerkmen M."/>
            <person name="Spevak C.C."/>
            <person name="Clutterbuck J."/>
            <person name="Kapitonov V."/>
            <person name="Jurka J."/>
            <person name="Scazzocchio C."/>
            <person name="Farman M.L."/>
            <person name="Butler J."/>
            <person name="Purcell S."/>
            <person name="Harris S."/>
            <person name="Braus G.H."/>
            <person name="Draht O."/>
            <person name="Busch S."/>
            <person name="D'Enfert C."/>
            <person name="Bouchier C."/>
            <person name="Goldman G.H."/>
            <person name="Bell-Pedersen D."/>
            <person name="Griffiths-Jones S."/>
            <person name="Doonan J.H."/>
            <person name="Yu J."/>
            <person name="Vienken K."/>
            <person name="Pain A."/>
            <person name="Freitag M."/>
            <person name="Selker E.U."/>
            <person name="Archer D.B."/>
            <person name="Penalva M.A."/>
            <person name="Oakley B.R."/>
            <person name="Momany M."/>
            <person name="Tanaka T."/>
            <person name="Kumagai T."/>
            <person name="Asai K."/>
            <person name="Machida M."/>
            <person name="Nierman W.C."/>
            <person name="Denning D.W."/>
            <person name="Caddick M.X."/>
            <person name="Hynes M."/>
            <person name="Paoletti M."/>
            <person name="Fischer R."/>
            <person name="Miller B.L."/>
            <person name="Dyer P.S."/>
            <person name="Sachs M.S."/>
            <person name="Osmani S.A."/>
            <person name="Birren B.W."/>
        </authorList>
    </citation>
    <scope>NUCLEOTIDE SEQUENCE [LARGE SCALE GENOMIC DNA]</scope>
    <source>
        <strain>FGSC A4 / ATCC 38163 / CBS 112.46 / NRRL 194 / M139</strain>
    </source>
</reference>
<reference key="3">
    <citation type="journal article" date="2009" name="Fungal Genet. Biol.">
        <title>The 2008 update of the Aspergillus nidulans genome annotation: a community effort.</title>
        <authorList>
            <person name="Wortman J.R."/>
            <person name="Gilsenan J.M."/>
            <person name="Joardar V."/>
            <person name="Deegan J."/>
            <person name="Clutterbuck J."/>
            <person name="Andersen M.R."/>
            <person name="Archer D."/>
            <person name="Bencina M."/>
            <person name="Braus G."/>
            <person name="Coutinho P."/>
            <person name="von Dohren H."/>
            <person name="Doonan J."/>
            <person name="Driessen A.J."/>
            <person name="Durek P."/>
            <person name="Espeso E."/>
            <person name="Fekete E."/>
            <person name="Flipphi M."/>
            <person name="Estrada C.G."/>
            <person name="Geysens S."/>
            <person name="Goldman G."/>
            <person name="de Groot P.W."/>
            <person name="Hansen K."/>
            <person name="Harris S.D."/>
            <person name="Heinekamp T."/>
            <person name="Helmstaedt K."/>
            <person name="Henrissat B."/>
            <person name="Hofmann G."/>
            <person name="Homan T."/>
            <person name="Horio T."/>
            <person name="Horiuchi H."/>
            <person name="James S."/>
            <person name="Jones M."/>
            <person name="Karaffa L."/>
            <person name="Karanyi Z."/>
            <person name="Kato M."/>
            <person name="Keller N."/>
            <person name="Kelly D.E."/>
            <person name="Kiel J.A."/>
            <person name="Kim J.M."/>
            <person name="van der Klei I.J."/>
            <person name="Klis F.M."/>
            <person name="Kovalchuk A."/>
            <person name="Krasevec N."/>
            <person name="Kubicek C.P."/>
            <person name="Liu B."/>
            <person name="Maccabe A."/>
            <person name="Meyer V."/>
            <person name="Mirabito P."/>
            <person name="Miskei M."/>
            <person name="Mos M."/>
            <person name="Mullins J."/>
            <person name="Nelson D.R."/>
            <person name="Nielsen J."/>
            <person name="Oakley B.R."/>
            <person name="Osmani S.A."/>
            <person name="Pakula T."/>
            <person name="Paszewski A."/>
            <person name="Paulsen I."/>
            <person name="Pilsyk S."/>
            <person name="Pocsi I."/>
            <person name="Punt P.J."/>
            <person name="Ram A.F."/>
            <person name="Ren Q."/>
            <person name="Robellet X."/>
            <person name="Robson G."/>
            <person name="Seiboth B."/>
            <person name="van Solingen P."/>
            <person name="Specht T."/>
            <person name="Sun J."/>
            <person name="Taheri-Talesh N."/>
            <person name="Takeshita N."/>
            <person name="Ussery D."/>
            <person name="vanKuyk P.A."/>
            <person name="Visser H."/>
            <person name="van de Vondervoort P.J."/>
            <person name="de Vries R.P."/>
            <person name="Walton J."/>
            <person name="Xiang X."/>
            <person name="Xiong Y."/>
            <person name="Zeng A.P."/>
            <person name="Brandt B.W."/>
            <person name="Cornell M.J."/>
            <person name="van den Hondel C.A."/>
            <person name="Visser J."/>
            <person name="Oliver S.G."/>
            <person name="Turner G."/>
        </authorList>
    </citation>
    <scope>GENOME REANNOTATION</scope>
    <source>
        <strain>FGSC A4 / ATCC 38163 / CBS 112.46 / NRRL 194 / M139</strain>
    </source>
</reference>
<evidence type="ECO:0000256" key="1">
    <source>
        <dbReference type="SAM" id="MobiDB-lite"/>
    </source>
</evidence>
<evidence type="ECO:0000305" key="2"/>
<proteinExistence type="evidence at transcript level"/>
<sequence length="268" mass="28742">MDSLTTHPATAQQARAFTSPSSLSFPGGTAFPGGADLTPPSDKDANMATNGQSANGNVNGQQQGANAANGNGVMPATPAATPGASAPGSGIVPTLQNIVATVNLDCRLDLKTIALHARNAEYNPKRFAAVIMRIREPKTTALIFASGKMVVTGAKSEDDSKLASRKYARIIQKLGFNAKFTDFKIQNIVGSCDIKFPIRLEGLASRHHNFSSYEPELFPGLIYRMMKPKIVLLIFVSGKIVLTGAKVREEIYQAFELIYPVLSDFRKV</sequence>
<dbReference type="EMBL" id="U28332">
    <property type="protein sequence ID" value="AAB57874.1"/>
    <property type="molecule type" value="mRNA"/>
</dbReference>
<dbReference type="EMBL" id="U28333">
    <property type="protein sequence ID" value="AAB57876.1"/>
    <property type="molecule type" value="Genomic_DNA"/>
</dbReference>
<dbReference type="EMBL" id="AACD01000084">
    <property type="protein sequence ID" value="EAA61054.1"/>
    <property type="status" value="ALT_SEQ"/>
    <property type="molecule type" value="Genomic_DNA"/>
</dbReference>
<dbReference type="EMBL" id="BN001303">
    <property type="protein sequence ID" value="CBF76358.1"/>
    <property type="status" value="ALT_SEQ"/>
    <property type="molecule type" value="Genomic_DNA"/>
</dbReference>
<dbReference type="RefSeq" id="XP_662580.1">
    <property type="nucleotide sequence ID" value="XM_657488.1"/>
</dbReference>
<dbReference type="SMR" id="Q12731"/>
<dbReference type="FunCoup" id="Q12731">
    <property type="interactions" value="1051"/>
</dbReference>
<dbReference type="STRING" id="227321.Q12731"/>
<dbReference type="KEGG" id="ani:ANIA_04976"/>
<dbReference type="VEuPathDB" id="FungiDB:AN4976"/>
<dbReference type="eggNOG" id="KOG3302">
    <property type="taxonomic scope" value="Eukaryota"/>
</dbReference>
<dbReference type="HOGENOM" id="CLU_060161_4_2_1"/>
<dbReference type="InParanoid" id="Q12731"/>
<dbReference type="OrthoDB" id="2127950at2759"/>
<dbReference type="Proteomes" id="UP000000560">
    <property type="component" value="Chromosome III"/>
</dbReference>
<dbReference type="GO" id="GO:0005634">
    <property type="term" value="C:nucleus"/>
    <property type="evidence" value="ECO:0007669"/>
    <property type="project" value="UniProtKB-SubCell"/>
</dbReference>
<dbReference type="GO" id="GO:0003677">
    <property type="term" value="F:DNA binding"/>
    <property type="evidence" value="ECO:0007669"/>
    <property type="project" value="UniProtKB-KW"/>
</dbReference>
<dbReference type="GO" id="GO:0016251">
    <property type="term" value="F:RNA polymerase II general transcription initiation factor activity"/>
    <property type="evidence" value="ECO:0000318"/>
    <property type="project" value="GO_Central"/>
</dbReference>
<dbReference type="GO" id="GO:0006352">
    <property type="term" value="P:DNA-templated transcription initiation"/>
    <property type="evidence" value="ECO:0000318"/>
    <property type="project" value="GO_Central"/>
</dbReference>
<dbReference type="CDD" id="cd04516">
    <property type="entry name" value="TBP_eukaryotes"/>
    <property type="match status" value="1"/>
</dbReference>
<dbReference type="FunFam" id="3.30.310.10:FF:000001">
    <property type="entry name" value="TATA-box-binding protein 2"/>
    <property type="match status" value="1"/>
</dbReference>
<dbReference type="FunFam" id="3.30.310.10:FF:000002">
    <property type="entry name" value="TATA-box-binding protein 2"/>
    <property type="match status" value="1"/>
</dbReference>
<dbReference type="Gene3D" id="3.30.310.10">
    <property type="entry name" value="TATA-Binding Protein"/>
    <property type="match status" value="2"/>
</dbReference>
<dbReference type="HAMAP" id="MF_00408">
    <property type="entry name" value="TATA_bind_prot_arch"/>
    <property type="match status" value="1"/>
</dbReference>
<dbReference type="InterPro" id="IPR000814">
    <property type="entry name" value="TBP"/>
</dbReference>
<dbReference type="InterPro" id="IPR030491">
    <property type="entry name" value="TBP_CS"/>
</dbReference>
<dbReference type="InterPro" id="IPR012295">
    <property type="entry name" value="TBP_dom_sf"/>
</dbReference>
<dbReference type="InterPro" id="IPR033710">
    <property type="entry name" value="TBP_eukaryotic"/>
</dbReference>
<dbReference type="PANTHER" id="PTHR10126">
    <property type="entry name" value="TATA-BOX BINDING PROTEIN"/>
    <property type="match status" value="1"/>
</dbReference>
<dbReference type="Pfam" id="PF00352">
    <property type="entry name" value="TBP"/>
    <property type="match status" value="2"/>
</dbReference>
<dbReference type="PRINTS" id="PR00686">
    <property type="entry name" value="TIFACTORIID"/>
</dbReference>
<dbReference type="SUPFAM" id="SSF55945">
    <property type="entry name" value="TATA-box binding protein-like"/>
    <property type="match status" value="2"/>
</dbReference>
<dbReference type="PROSITE" id="PS00351">
    <property type="entry name" value="TFIID"/>
    <property type="match status" value="2"/>
</dbReference>
<gene>
    <name type="primary">tbpA</name>
    <name type="synonym">tbp</name>
    <name type="ORF">AN4976</name>
</gene>
<protein>
    <recommendedName>
        <fullName>TATA-box-binding protein</fullName>
    </recommendedName>
    <alternativeName>
        <fullName>TATA sequence-binding protein</fullName>
        <shortName>TBP</shortName>
    </alternativeName>
    <alternativeName>
        <fullName>TATA-binding factor</fullName>
    </alternativeName>
    <alternativeName>
        <fullName>TATA-box factor</fullName>
    </alternativeName>
    <alternativeName>
        <fullName>Transcription initiation factor TFIID TBP subunit</fullName>
    </alternativeName>
</protein>
<organism>
    <name type="scientific">Emericella nidulans (strain FGSC A4 / ATCC 38163 / CBS 112.46 / NRRL 194 / M139)</name>
    <name type="common">Aspergillus nidulans</name>
    <dbReference type="NCBI Taxonomy" id="227321"/>
    <lineage>
        <taxon>Eukaryota</taxon>
        <taxon>Fungi</taxon>
        <taxon>Dikarya</taxon>
        <taxon>Ascomycota</taxon>
        <taxon>Pezizomycotina</taxon>
        <taxon>Eurotiomycetes</taxon>
        <taxon>Eurotiomycetidae</taxon>
        <taxon>Eurotiales</taxon>
        <taxon>Aspergillaceae</taxon>
        <taxon>Aspergillus</taxon>
        <taxon>Aspergillus subgen. Nidulantes</taxon>
    </lineage>
</organism>
<comment type="function">
    <text>General transcription factor that functions at the core of the DNA-binding multiprotein factor TFIID. Binding of TFIID to the TATA box is the initial transcriptional step of the pre-initiation complex (PIC), playing a role in the activation of eukaryotic genes transcribed by RNA polymerase II.</text>
</comment>
<comment type="subunit">
    <text>Belongs to the TFIID complex together with the TBP-associated factors (TAFs). Binds DNA as monomer.</text>
</comment>
<comment type="subcellular location">
    <subcellularLocation>
        <location>Nucleus</location>
    </subcellularLocation>
</comment>
<comment type="similarity">
    <text evidence="2">Belongs to the TBP family.</text>
</comment>
<comment type="sequence caution" evidence="2">
    <conflict type="erroneous gene model prediction">
        <sequence resource="EMBL-CDS" id="CBF76358"/>
    </conflict>
</comment>
<comment type="sequence caution" evidence="2">
    <conflict type="erroneous gene model prediction">
        <sequence resource="EMBL-CDS" id="EAA61054"/>
    </conflict>
</comment>
<comment type="sequence caution" evidence="2">
    <conflict type="erroneous initiation">
        <sequence resource="EMBL-CDS" id="EAA61054"/>
    </conflict>
    <text>Truncated N-terminus.</text>
</comment>